<comment type="function">
    <text evidence="1">Catalyzes the conversion of dethiobiotin (DTB) to biotin by the insertion of a sulfur atom into dethiobiotin via a radical-based mechanism.</text>
</comment>
<comment type="catalytic activity">
    <reaction evidence="1">
        <text>(4R,5S)-dethiobiotin + (sulfur carrier)-SH + 2 reduced [2Fe-2S]-[ferredoxin] + 2 S-adenosyl-L-methionine = (sulfur carrier)-H + biotin + 2 5'-deoxyadenosine + 2 L-methionine + 2 oxidized [2Fe-2S]-[ferredoxin]</text>
        <dbReference type="Rhea" id="RHEA:22060"/>
        <dbReference type="Rhea" id="RHEA-COMP:10000"/>
        <dbReference type="Rhea" id="RHEA-COMP:10001"/>
        <dbReference type="Rhea" id="RHEA-COMP:14737"/>
        <dbReference type="Rhea" id="RHEA-COMP:14739"/>
        <dbReference type="ChEBI" id="CHEBI:17319"/>
        <dbReference type="ChEBI" id="CHEBI:29917"/>
        <dbReference type="ChEBI" id="CHEBI:33737"/>
        <dbReference type="ChEBI" id="CHEBI:33738"/>
        <dbReference type="ChEBI" id="CHEBI:57586"/>
        <dbReference type="ChEBI" id="CHEBI:57844"/>
        <dbReference type="ChEBI" id="CHEBI:59789"/>
        <dbReference type="ChEBI" id="CHEBI:64428"/>
        <dbReference type="ChEBI" id="CHEBI:149473"/>
        <dbReference type="EC" id="2.8.1.6"/>
    </reaction>
</comment>
<comment type="cofactor">
    <cofactor evidence="1">
        <name>[4Fe-4S] cluster</name>
        <dbReference type="ChEBI" id="CHEBI:49883"/>
    </cofactor>
    <text evidence="1">Binds 1 [4Fe-4S] cluster. The cluster is coordinated with 3 cysteines and an exchangeable S-adenosyl-L-methionine.</text>
</comment>
<comment type="cofactor">
    <cofactor evidence="1">
        <name>[2Fe-2S] cluster</name>
        <dbReference type="ChEBI" id="CHEBI:190135"/>
    </cofactor>
    <text evidence="1">Binds 1 [2Fe-2S] cluster. The cluster is coordinated with 3 cysteines and 1 arginine.</text>
</comment>
<comment type="pathway">
    <text evidence="1">Cofactor biosynthesis; biotin biosynthesis; biotin from 7,8-diaminononanoate: step 2/2.</text>
</comment>
<comment type="subunit">
    <text evidence="1">Homodimer.</text>
</comment>
<comment type="similarity">
    <text evidence="1">Belongs to the radical SAM superfamily. Biotin synthase family.</text>
</comment>
<dbReference type="EC" id="2.8.1.6" evidence="1"/>
<dbReference type="EMBL" id="AM743169">
    <property type="protein sequence ID" value="CAQ47822.1"/>
    <property type="molecule type" value="Genomic_DNA"/>
</dbReference>
<dbReference type="RefSeq" id="WP_005414796.1">
    <property type="nucleotide sequence ID" value="NC_010943.1"/>
</dbReference>
<dbReference type="SMR" id="B2FLM4"/>
<dbReference type="EnsemblBacteria" id="CAQ47822">
    <property type="protein sequence ID" value="CAQ47822"/>
    <property type="gene ID" value="Smlt4459"/>
</dbReference>
<dbReference type="KEGG" id="sml:Smlt4459"/>
<dbReference type="PATRIC" id="fig|522373.3.peg.4203"/>
<dbReference type="eggNOG" id="COG0502">
    <property type="taxonomic scope" value="Bacteria"/>
</dbReference>
<dbReference type="HOGENOM" id="CLU_033172_1_2_6"/>
<dbReference type="UniPathway" id="UPA00078">
    <property type="reaction ID" value="UER00162"/>
</dbReference>
<dbReference type="Proteomes" id="UP000008840">
    <property type="component" value="Chromosome"/>
</dbReference>
<dbReference type="GO" id="GO:0051537">
    <property type="term" value="F:2 iron, 2 sulfur cluster binding"/>
    <property type="evidence" value="ECO:0007669"/>
    <property type="project" value="UniProtKB-KW"/>
</dbReference>
<dbReference type="GO" id="GO:0051539">
    <property type="term" value="F:4 iron, 4 sulfur cluster binding"/>
    <property type="evidence" value="ECO:0007669"/>
    <property type="project" value="UniProtKB-KW"/>
</dbReference>
<dbReference type="GO" id="GO:0004076">
    <property type="term" value="F:biotin synthase activity"/>
    <property type="evidence" value="ECO:0007669"/>
    <property type="project" value="UniProtKB-UniRule"/>
</dbReference>
<dbReference type="GO" id="GO:0005506">
    <property type="term" value="F:iron ion binding"/>
    <property type="evidence" value="ECO:0007669"/>
    <property type="project" value="UniProtKB-UniRule"/>
</dbReference>
<dbReference type="GO" id="GO:0009102">
    <property type="term" value="P:biotin biosynthetic process"/>
    <property type="evidence" value="ECO:0007669"/>
    <property type="project" value="UniProtKB-UniRule"/>
</dbReference>
<dbReference type="CDD" id="cd01335">
    <property type="entry name" value="Radical_SAM"/>
    <property type="match status" value="1"/>
</dbReference>
<dbReference type="FunFam" id="3.20.20.70:FF:000011">
    <property type="entry name" value="Biotin synthase"/>
    <property type="match status" value="1"/>
</dbReference>
<dbReference type="Gene3D" id="3.20.20.70">
    <property type="entry name" value="Aldolase class I"/>
    <property type="match status" value="1"/>
</dbReference>
<dbReference type="HAMAP" id="MF_01694">
    <property type="entry name" value="BioB"/>
    <property type="match status" value="1"/>
</dbReference>
<dbReference type="InterPro" id="IPR013785">
    <property type="entry name" value="Aldolase_TIM"/>
</dbReference>
<dbReference type="InterPro" id="IPR010722">
    <property type="entry name" value="BATS_dom"/>
</dbReference>
<dbReference type="InterPro" id="IPR002684">
    <property type="entry name" value="Biotin_synth/BioAB"/>
</dbReference>
<dbReference type="InterPro" id="IPR024177">
    <property type="entry name" value="Biotin_synthase"/>
</dbReference>
<dbReference type="InterPro" id="IPR006638">
    <property type="entry name" value="Elp3/MiaA/NifB-like_rSAM"/>
</dbReference>
<dbReference type="InterPro" id="IPR007197">
    <property type="entry name" value="rSAM"/>
</dbReference>
<dbReference type="NCBIfam" id="TIGR00433">
    <property type="entry name" value="bioB"/>
    <property type="match status" value="1"/>
</dbReference>
<dbReference type="PANTHER" id="PTHR22976">
    <property type="entry name" value="BIOTIN SYNTHASE"/>
    <property type="match status" value="1"/>
</dbReference>
<dbReference type="PANTHER" id="PTHR22976:SF2">
    <property type="entry name" value="BIOTIN SYNTHASE, MITOCHONDRIAL"/>
    <property type="match status" value="1"/>
</dbReference>
<dbReference type="Pfam" id="PF06968">
    <property type="entry name" value="BATS"/>
    <property type="match status" value="1"/>
</dbReference>
<dbReference type="Pfam" id="PF04055">
    <property type="entry name" value="Radical_SAM"/>
    <property type="match status" value="1"/>
</dbReference>
<dbReference type="PIRSF" id="PIRSF001619">
    <property type="entry name" value="Biotin_synth"/>
    <property type="match status" value="1"/>
</dbReference>
<dbReference type="SFLD" id="SFLDG01060">
    <property type="entry name" value="BATS_domain_containing"/>
    <property type="match status" value="1"/>
</dbReference>
<dbReference type="SFLD" id="SFLDF00272">
    <property type="entry name" value="biotin_synthase"/>
    <property type="match status" value="1"/>
</dbReference>
<dbReference type="SMART" id="SM00876">
    <property type="entry name" value="BATS"/>
    <property type="match status" value="1"/>
</dbReference>
<dbReference type="SMART" id="SM00729">
    <property type="entry name" value="Elp3"/>
    <property type="match status" value="1"/>
</dbReference>
<dbReference type="SUPFAM" id="SSF102114">
    <property type="entry name" value="Radical SAM enzymes"/>
    <property type="match status" value="1"/>
</dbReference>
<dbReference type="PROSITE" id="PS51918">
    <property type="entry name" value="RADICAL_SAM"/>
    <property type="match status" value="1"/>
</dbReference>
<protein>
    <recommendedName>
        <fullName evidence="1">Biotin synthase</fullName>
        <ecNumber evidence="1">2.8.1.6</ecNumber>
    </recommendedName>
</protein>
<keyword id="KW-0001">2Fe-2S</keyword>
<keyword id="KW-0004">4Fe-4S</keyword>
<keyword id="KW-0093">Biotin biosynthesis</keyword>
<keyword id="KW-0408">Iron</keyword>
<keyword id="KW-0411">Iron-sulfur</keyword>
<keyword id="KW-0479">Metal-binding</keyword>
<keyword id="KW-1185">Reference proteome</keyword>
<keyword id="KW-0949">S-adenosyl-L-methionine</keyword>
<keyword id="KW-0808">Transferase</keyword>
<organism>
    <name type="scientific">Stenotrophomonas maltophilia (strain K279a)</name>
    <dbReference type="NCBI Taxonomy" id="522373"/>
    <lineage>
        <taxon>Bacteria</taxon>
        <taxon>Pseudomonadati</taxon>
        <taxon>Pseudomonadota</taxon>
        <taxon>Gammaproteobacteria</taxon>
        <taxon>Lysobacterales</taxon>
        <taxon>Lysobacteraceae</taxon>
        <taxon>Stenotrophomonas</taxon>
        <taxon>Stenotrophomonas maltophilia group</taxon>
    </lineage>
</organism>
<accession>B2FLM4</accession>
<evidence type="ECO:0000255" key="1">
    <source>
        <dbReference type="HAMAP-Rule" id="MF_01694"/>
    </source>
</evidence>
<evidence type="ECO:0000255" key="2">
    <source>
        <dbReference type="PROSITE-ProRule" id="PRU01266"/>
    </source>
</evidence>
<name>BIOB_STRMK</name>
<proteinExistence type="inferred from homology"/>
<feature type="chain" id="PRO_0000381667" description="Biotin synthase">
    <location>
        <begin position="1"/>
        <end position="347"/>
    </location>
</feature>
<feature type="domain" description="Radical SAM core" evidence="2">
    <location>
        <begin position="40"/>
        <end position="258"/>
    </location>
</feature>
<feature type="binding site" evidence="1">
    <location>
        <position position="55"/>
    </location>
    <ligand>
        <name>[4Fe-4S] cluster</name>
        <dbReference type="ChEBI" id="CHEBI:49883"/>
        <note>4Fe-4S-S-AdoMet</note>
    </ligand>
</feature>
<feature type="binding site" evidence="1">
    <location>
        <position position="59"/>
    </location>
    <ligand>
        <name>[4Fe-4S] cluster</name>
        <dbReference type="ChEBI" id="CHEBI:49883"/>
        <note>4Fe-4S-S-AdoMet</note>
    </ligand>
</feature>
<feature type="binding site" evidence="1">
    <location>
        <position position="62"/>
    </location>
    <ligand>
        <name>[4Fe-4S] cluster</name>
        <dbReference type="ChEBI" id="CHEBI:49883"/>
        <note>4Fe-4S-S-AdoMet</note>
    </ligand>
</feature>
<feature type="binding site" evidence="1">
    <location>
        <position position="99"/>
    </location>
    <ligand>
        <name>[2Fe-2S] cluster</name>
        <dbReference type="ChEBI" id="CHEBI:190135"/>
    </ligand>
</feature>
<feature type="binding site" evidence="1">
    <location>
        <position position="130"/>
    </location>
    <ligand>
        <name>[2Fe-2S] cluster</name>
        <dbReference type="ChEBI" id="CHEBI:190135"/>
    </ligand>
</feature>
<feature type="binding site" evidence="1">
    <location>
        <position position="190"/>
    </location>
    <ligand>
        <name>[2Fe-2S] cluster</name>
        <dbReference type="ChEBI" id="CHEBI:190135"/>
    </ligand>
</feature>
<feature type="binding site" evidence="1">
    <location>
        <position position="262"/>
    </location>
    <ligand>
        <name>[2Fe-2S] cluster</name>
        <dbReference type="ChEBI" id="CHEBI:190135"/>
    </ligand>
</feature>
<sequence>MAAAIRHDWQHDELQALFDLPFPELLFRAAAVHREHFDPAQVQVSTLLSVKTGGCPEDCAYCPQAQRYSTGVNAQKLMETDAVLAKARQAKAAGASRFCMGAAWRSPKDRDIPKVAAMIAGVKALGLETCATLGMLSGEQARALKDAGLDYYNHNLDTAPDYYDSIIHTRQYQDRLDTLEHVRDAGLKTCCGGIVGMGETRAQRVGLLLALASLPAHPDSVPINKLVQVAGTPLHGSAELDPFEFVRMIAVARIAMPRSMVRLSAGREAMSDELQALCFLAGANSIFYGDKLLTTGNPESERDLALFARLGLQPMAVQVDAEGHDHGGTVHADISADTPGCGCAHAA</sequence>
<gene>
    <name evidence="1" type="primary">bioB</name>
    <name type="ordered locus">Smlt4459</name>
</gene>
<reference key="1">
    <citation type="journal article" date="2008" name="Genome Biol.">
        <title>The complete genome, comparative and functional analysis of Stenotrophomonas maltophilia reveals an organism heavily shielded by drug resistance determinants.</title>
        <authorList>
            <person name="Crossman L.C."/>
            <person name="Gould V.C."/>
            <person name="Dow J.M."/>
            <person name="Vernikos G.S."/>
            <person name="Okazaki A."/>
            <person name="Sebaihia M."/>
            <person name="Saunders D."/>
            <person name="Arrowsmith C."/>
            <person name="Carver T."/>
            <person name="Peters N."/>
            <person name="Adlem E."/>
            <person name="Kerhornou A."/>
            <person name="Lord A."/>
            <person name="Murphy L."/>
            <person name="Seeger K."/>
            <person name="Squares R."/>
            <person name="Rutter S."/>
            <person name="Quail M.A."/>
            <person name="Rajandream M.A."/>
            <person name="Harris D."/>
            <person name="Churcher C."/>
            <person name="Bentley S.D."/>
            <person name="Parkhill J."/>
            <person name="Thomson N.R."/>
            <person name="Avison M.B."/>
        </authorList>
    </citation>
    <scope>NUCLEOTIDE SEQUENCE [LARGE SCALE GENOMIC DNA]</scope>
    <source>
        <strain>K279a</strain>
    </source>
</reference>